<proteinExistence type="inferred from homology"/>
<comment type="function">
    <text evidence="1">Transcription factor that acts by binding directly to the RNA polymerase (RNAP). Required for negative regulation of rRNA expression and positive regulation of several amino acid biosynthesis promoters. Also required for regulation of fis expression.</text>
</comment>
<comment type="subunit">
    <text evidence="1">Interacts directly with the RNA polymerase.</text>
</comment>
<comment type="subcellular location">
    <subcellularLocation>
        <location evidence="1">Cytoplasm</location>
    </subcellularLocation>
</comment>
<comment type="similarity">
    <text evidence="1">Belongs to the DksA family.</text>
</comment>
<accession>P0ABS3</accession>
<accession>P18274</accession>
<keyword id="KW-0175">Coiled coil</keyword>
<keyword id="KW-0963">Cytoplasm</keyword>
<keyword id="KW-0479">Metal-binding</keyword>
<keyword id="KW-1185">Reference proteome</keyword>
<keyword id="KW-0862">Zinc</keyword>
<keyword id="KW-0863">Zinc-finger</keyword>
<gene>
    <name evidence="1" type="primary">dksA</name>
    <name type="ordered locus">Z0156</name>
    <name type="ordered locus">ECs0149</name>
</gene>
<protein>
    <recommendedName>
        <fullName evidence="1">RNA polymerase-binding transcription factor DksA</fullName>
    </recommendedName>
</protein>
<sequence length="151" mass="17528">MQEGQNRKTSSLSILAIAGVEPYQEKPGEEYMNEAQLAHFRRILEAWRNQLRDEVDRTVTHMQDEAANFPDPVDRAAQEEEFSLELRNRDRERKLIKKIEKTLKKVEDEDFGYCESCGVEIGIRRLEARPTADLCIDCKTLAEIREKQMAG</sequence>
<feature type="chain" id="PRO_0000187537" description="RNA polymerase-binding transcription factor DksA">
    <location>
        <begin position="1"/>
        <end position="151"/>
    </location>
</feature>
<feature type="zinc finger region" description="dksA C4-type" evidence="1">
    <location>
        <begin position="114"/>
        <end position="138"/>
    </location>
</feature>
<feature type="coiled-coil region" evidence="1">
    <location>
        <begin position="33"/>
        <end position="54"/>
    </location>
</feature>
<feature type="binding site" evidence="1">
    <location>
        <position position="114"/>
    </location>
    <ligand>
        <name>Zn(2+)</name>
        <dbReference type="ChEBI" id="CHEBI:29105"/>
    </ligand>
</feature>
<feature type="binding site" evidence="1">
    <location>
        <position position="117"/>
    </location>
    <ligand>
        <name>Zn(2+)</name>
        <dbReference type="ChEBI" id="CHEBI:29105"/>
    </ligand>
</feature>
<feature type="binding site" evidence="1">
    <location>
        <position position="135"/>
    </location>
    <ligand>
        <name>Zn(2+)</name>
        <dbReference type="ChEBI" id="CHEBI:29105"/>
    </ligand>
</feature>
<feature type="binding site" evidence="1">
    <location>
        <position position="138"/>
    </location>
    <ligand>
        <name>Zn(2+)</name>
        <dbReference type="ChEBI" id="CHEBI:29105"/>
    </ligand>
</feature>
<name>DKSA_ECO57</name>
<reference key="1">
    <citation type="journal article" date="2001" name="Nature">
        <title>Genome sequence of enterohaemorrhagic Escherichia coli O157:H7.</title>
        <authorList>
            <person name="Perna N.T."/>
            <person name="Plunkett G. III"/>
            <person name="Burland V."/>
            <person name="Mau B."/>
            <person name="Glasner J.D."/>
            <person name="Rose D.J."/>
            <person name="Mayhew G.F."/>
            <person name="Evans P.S."/>
            <person name="Gregor J."/>
            <person name="Kirkpatrick H.A."/>
            <person name="Posfai G."/>
            <person name="Hackett J."/>
            <person name="Klink S."/>
            <person name="Boutin A."/>
            <person name="Shao Y."/>
            <person name="Miller L."/>
            <person name="Grotbeck E.J."/>
            <person name="Davis N.W."/>
            <person name="Lim A."/>
            <person name="Dimalanta E.T."/>
            <person name="Potamousis K."/>
            <person name="Apodaca J."/>
            <person name="Anantharaman T.S."/>
            <person name="Lin J."/>
            <person name="Yen G."/>
            <person name="Schwartz D.C."/>
            <person name="Welch R.A."/>
            <person name="Blattner F.R."/>
        </authorList>
    </citation>
    <scope>NUCLEOTIDE SEQUENCE [LARGE SCALE GENOMIC DNA]</scope>
    <source>
        <strain>O157:H7 / EDL933 / ATCC 700927 / EHEC</strain>
    </source>
</reference>
<reference key="2">
    <citation type="journal article" date="2001" name="DNA Res.">
        <title>Complete genome sequence of enterohemorrhagic Escherichia coli O157:H7 and genomic comparison with a laboratory strain K-12.</title>
        <authorList>
            <person name="Hayashi T."/>
            <person name="Makino K."/>
            <person name="Ohnishi M."/>
            <person name="Kurokawa K."/>
            <person name="Ishii K."/>
            <person name="Yokoyama K."/>
            <person name="Han C.-G."/>
            <person name="Ohtsubo E."/>
            <person name="Nakayama K."/>
            <person name="Murata T."/>
            <person name="Tanaka M."/>
            <person name="Tobe T."/>
            <person name="Iida T."/>
            <person name="Takami H."/>
            <person name="Honda T."/>
            <person name="Sasakawa C."/>
            <person name="Ogasawara N."/>
            <person name="Yasunaga T."/>
            <person name="Kuhara S."/>
            <person name="Shiba T."/>
            <person name="Hattori M."/>
            <person name="Shinagawa H."/>
        </authorList>
    </citation>
    <scope>NUCLEOTIDE SEQUENCE [LARGE SCALE GENOMIC DNA]</scope>
    <source>
        <strain>O157:H7 / Sakai / RIMD 0509952 / EHEC</strain>
    </source>
</reference>
<organism>
    <name type="scientific">Escherichia coli O157:H7</name>
    <dbReference type="NCBI Taxonomy" id="83334"/>
    <lineage>
        <taxon>Bacteria</taxon>
        <taxon>Pseudomonadati</taxon>
        <taxon>Pseudomonadota</taxon>
        <taxon>Gammaproteobacteria</taxon>
        <taxon>Enterobacterales</taxon>
        <taxon>Enterobacteriaceae</taxon>
        <taxon>Escherichia</taxon>
    </lineage>
</organism>
<evidence type="ECO:0000255" key="1">
    <source>
        <dbReference type="HAMAP-Rule" id="MF_00926"/>
    </source>
</evidence>
<dbReference type="EMBL" id="AE005174">
    <property type="protein sequence ID" value="AAG54449.1"/>
    <property type="molecule type" value="Genomic_DNA"/>
</dbReference>
<dbReference type="EMBL" id="BA000007">
    <property type="protein sequence ID" value="BAB33572.1"/>
    <property type="molecule type" value="Genomic_DNA"/>
</dbReference>
<dbReference type="PIR" id="E85498">
    <property type="entry name" value="E85498"/>
</dbReference>
<dbReference type="PIR" id="E90647">
    <property type="entry name" value="E90647"/>
</dbReference>
<dbReference type="RefSeq" id="NP_308176.1">
    <property type="nucleotide sequence ID" value="NC_002695.1"/>
</dbReference>
<dbReference type="RefSeq" id="WP_001155227.1">
    <property type="nucleotide sequence ID" value="NZ_VOAI01000002.1"/>
</dbReference>
<dbReference type="SMR" id="P0ABS3"/>
<dbReference type="STRING" id="155864.Z0156"/>
<dbReference type="GeneID" id="913772"/>
<dbReference type="GeneID" id="93777282"/>
<dbReference type="KEGG" id="ece:Z0156"/>
<dbReference type="KEGG" id="ecs:ECs_0149"/>
<dbReference type="PATRIC" id="fig|386585.9.peg.248"/>
<dbReference type="eggNOG" id="COG1734">
    <property type="taxonomic scope" value="Bacteria"/>
</dbReference>
<dbReference type="HOGENOM" id="CLU_043144_2_0_6"/>
<dbReference type="OMA" id="EENVNHP"/>
<dbReference type="Proteomes" id="UP000000558">
    <property type="component" value="Chromosome"/>
</dbReference>
<dbReference type="Proteomes" id="UP000002519">
    <property type="component" value="Chromosome"/>
</dbReference>
<dbReference type="GO" id="GO:0005737">
    <property type="term" value="C:cytoplasm"/>
    <property type="evidence" value="ECO:0007669"/>
    <property type="project" value="UniProtKB-SubCell"/>
</dbReference>
<dbReference type="GO" id="GO:0008270">
    <property type="term" value="F:zinc ion binding"/>
    <property type="evidence" value="ECO:0007669"/>
    <property type="project" value="UniProtKB-UniRule"/>
</dbReference>
<dbReference type="GO" id="GO:0010468">
    <property type="term" value="P:regulation of gene expression"/>
    <property type="evidence" value="ECO:0007669"/>
    <property type="project" value="UniProtKB-UniRule"/>
</dbReference>
<dbReference type="FunFam" id="1.20.120.910:FF:000001">
    <property type="entry name" value="RNA polymerase-binding transcription factor DksA"/>
    <property type="match status" value="1"/>
</dbReference>
<dbReference type="Gene3D" id="1.20.120.910">
    <property type="entry name" value="DksA, coiled-coil domain"/>
    <property type="match status" value="1"/>
</dbReference>
<dbReference type="HAMAP" id="MF_00926">
    <property type="entry name" value="DksA"/>
    <property type="match status" value="1"/>
</dbReference>
<dbReference type="InterPro" id="IPR048489">
    <property type="entry name" value="DksA_N"/>
</dbReference>
<dbReference type="InterPro" id="IPR012784">
    <property type="entry name" value="DksA_RNA_pol-bd"/>
</dbReference>
<dbReference type="InterPro" id="IPR037187">
    <property type="entry name" value="DnaK_N"/>
</dbReference>
<dbReference type="InterPro" id="IPR020460">
    <property type="entry name" value="Znf_C4-type_bac"/>
</dbReference>
<dbReference type="InterPro" id="IPR000962">
    <property type="entry name" value="Znf_DskA_TraR"/>
</dbReference>
<dbReference type="InterPro" id="IPR020458">
    <property type="entry name" value="Znf_DskA_TraR_CS"/>
</dbReference>
<dbReference type="NCBIfam" id="TIGR02420">
    <property type="entry name" value="dksA"/>
    <property type="match status" value="1"/>
</dbReference>
<dbReference type="NCBIfam" id="NF008045">
    <property type="entry name" value="PRK10778.1"/>
    <property type="match status" value="1"/>
</dbReference>
<dbReference type="PANTHER" id="PTHR33823:SF2">
    <property type="entry name" value="RNA POLYMERASE-BINDING TRANSCRIPTION FACTOR DKSA"/>
    <property type="match status" value="1"/>
</dbReference>
<dbReference type="PANTHER" id="PTHR33823">
    <property type="entry name" value="RNA POLYMERASE-BINDING TRANSCRIPTION FACTOR DKSA-RELATED"/>
    <property type="match status" value="1"/>
</dbReference>
<dbReference type="Pfam" id="PF21157">
    <property type="entry name" value="DksA_N"/>
    <property type="match status" value="1"/>
</dbReference>
<dbReference type="Pfam" id="PF01258">
    <property type="entry name" value="zf-dskA_traR"/>
    <property type="match status" value="1"/>
</dbReference>
<dbReference type="PRINTS" id="PR00618">
    <property type="entry name" value="DKSAZNFINGER"/>
</dbReference>
<dbReference type="SUPFAM" id="SSF109635">
    <property type="entry name" value="DnaK suppressor protein DksA, alpha-hairpin domain"/>
    <property type="match status" value="1"/>
</dbReference>
<dbReference type="SUPFAM" id="SSF57716">
    <property type="entry name" value="Glucocorticoid receptor-like (DNA-binding domain)"/>
    <property type="match status" value="1"/>
</dbReference>
<dbReference type="PROSITE" id="PS01102">
    <property type="entry name" value="ZF_DKSA_1"/>
    <property type="match status" value="1"/>
</dbReference>
<dbReference type="PROSITE" id="PS51128">
    <property type="entry name" value="ZF_DKSA_2"/>
    <property type="match status" value="1"/>
</dbReference>